<name>DXR_CUPMC</name>
<protein>
    <recommendedName>
        <fullName evidence="1">1-deoxy-D-xylulose 5-phosphate reductoisomerase</fullName>
        <shortName evidence="1">DXP reductoisomerase</shortName>
        <ecNumber evidence="1">1.1.1.267</ecNumber>
    </recommendedName>
    <alternativeName>
        <fullName evidence="1">1-deoxyxylulose-5-phosphate reductoisomerase</fullName>
    </alternativeName>
    <alternativeName>
        <fullName evidence="1">2-C-methyl-D-erythritol 4-phosphate synthase</fullName>
    </alternativeName>
</protein>
<reference key="1">
    <citation type="journal article" date="2010" name="PLoS ONE">
        <title>The complete genome sequence of Cupriavidus metallidurans strain CH34, a master survivalist in harsh and anthropogenic environments.</title>
        <authorList>
            <person name="Janssen P.J."/>
            <person name="Van Houdt R."/>
            <person name="Moors H."/>
            <person name="Monsieurs P."/>
            <person name="Morin N."/>
            <person name="Michaux A."/>
            <person name="Benotmane M.A."/>
            <person name="Leys N."/>
            <person name="Vallaeys T."/>
            <person name="Lapidus A."/>
            <person name="Monchy S."/>
            <person name="Medigue C."/>
            <person name="Taghavi S."/>
            <person name="McCorkle S."/>
            <person name="Dunn J."/>
            <person name="van der Lelie D."/>
            <person name="Mergeay M."/>
        </authorList>
    </citation>
    <scope>NUCLEOTIDE SEQUENCE [LARGE SCALE GENOMIC DNA]</scope>
    <source>
        <strain>ATCC 43123 / DSM 2839 / NBRC 102507 / CH34</strain>
    </source>
</reference>
<gene>
    <name evidence="1" type="primary">dxr</name>
    <name type="ordered locus">Rmet_1441</name>
</gene>
<accession>Q1LNF2</accession>
<proteinExistence type="inferred from homology"/>
<keyword id="KW-0414">Isoprene biosynthesis</keyword>
<keyword id="KW-0464">Manganese</keyword>
<keyword id="KW-0479">Metal-binding</keyword>
<keyword id="KW-0521">NADP</keyword>
<keyword id="KW-0560">Oxidoreductase</keyword>
<keyword id="KW-1185">Reference proteome</keyword>
<organism>
    <name type="scientific">Cupriavidus metallidurans (strain ATCC 43123 / DSM 2839 / NBRC 102507 / CH34)</name>
    <name type="common">Ralstonia metallidurans</name>
    <dbReference type="NCBI Taxonomy" id="266264"/>
    <lineage>
        <taxon>Bacteria</taxon>
        <taxon>Pseudomonadati</taxon>
        <taxon>Pseudomonadota</taxon>
        <taxon>Betaproteobacteria</taxon>
        <taxon>Burkholderiales</taxon>
        <taxon>Burkholderiaceae</taxon>
        <taxon>Cupriavidus</taxon>
    </lineage>
</organism>
<feature type="chain" id="PRO_1000058417" description="1-deoxy-D-xylulose 5-phosphate reductoisomerase">
    <location>
        <begin position="1"/>
        <end position="392"/>
    </location>
</feature>
<feature type="binding site" evidence="1">
    <location>
        <position position="10"/>
    </location>
    <ligand>
        <name>NADPH</name>
        <dbReference type="ChEBI" id="CHEBI:57783"/>
    </ligand>
</feature>
<feature type="binding site" evidence="1">
    <location>
        <position position="11"/>
    </location>
    <ligand>
        <name>NADPH</name>
        <dbReference type="ChEBI" id="CHEBI:57783"/>
    </ligand>
</feature>
<feature type="binding site" evidence="1">
    <location>
        <position position="12"/>
    </location>
    <ligand>
        <name>NADPH</name>
        <dbReference type="ChEBI" id="CHEBI:57783"/>
    </ligand>
</feature>
<feature type="binding site" evidence="1">
    <location>
        <position position="13"/>
    </location>
    <ligand>
        <name>NADPH</name>
        <dbReference type="ChEBI" id="CHEBI:57783"/>
    </ligand>
</feature>
<feature type="binding site" evidence="1">
    <location>
        <position position="37"/>
    </location>
    <ligand>
        <name>NADPH</name>
        <dbReference type="ChEBI" id="CHEBI:57783"/>
    </ligand>
</feature>
<feature type="binding site" evidence="1">
    <location>
        <position position="38"/>
    </location>
    <ligand>
        <name>NADPH</name>
        <dbReference type="ChEBI" id="CHEBI:57783"/>
    </ligand>
</feature>
<feature type="binding site" evidence="1">
    <location>
        <position position="124"/>
    </location>
    <ligand>
        <name>NADPH</name>
        <dbReference type="ChEBI" id="CHEBI:57783"/>
    </ligand>
</feature>
<feature type="binding site" evidence="1">
    <location>
        <position position="125"/>
    </location>
    <ligand>
        <name>1-deoxy-D-xylulose 5-phosphate</name>
        <dbReference type="ChEBI" id="CHEBI:57792"/>
    </ligand>
</feature>
<feature type="binding site" evidence="1">
    <location>
        <position position="126"/>
    </location>
    <ligand>
        <name>NADPH</name>
        <dbReference type="ChEBI" id="CHEBI:57783"/>
    </ligand>
</feature>
<feature type="binding site" evidence="1">
    <location>
        <position position="150"/>
    </location>
    <ligand>
        <name>Mn(2+)</name>
        <dbReference type="ChEBI" id="CHEBI:29035"/>
    </ligand>
</feature>
<feature type="binding site" evidence="1">
    <location>
        <position position="151"/>
    </location>
    <ligand>
        <name>1-deoxy-D-xylulose 5-phosphate</name>
        <dbReference type="ChEBI" id="CHEBI:57792"/>
    </ligand>
</feature>
<feature type="binding site" evidence="1">
    <location>
        <position position="152"/>
    </location>
    <ligand>
        <name>1-deoxy-D-xylulose 5-phosphate</name>
        <dbReference type="ChEBI" id="CHEBI:57792"/>
    </ligand>
</feature>
<feature type="binding site" evidence="1">
    <location>
        <position position="152"/>
    </location>
    <ligand>
        <name>Mn(2+)</name>
        <dbReference type="ChEBI" id="CHEBI:29035"/>
    </ligand>
</feature>
<feature type="binding site" evidence="1">
    <location>
        <position position="179"/>
    </location>
    <ligand>
        <name>1-deoxy-D-xylulose 5-phosphate</name>
        <dbReference type="ChEBI" id="CHEBI:57792"/>
    </ligand>
</feature>
<feature type="binding site" evidence="1">
    <location>
        <position position="202"/>
    </location>
    <ligand>
        <name>1-deoxy-D-xylulose 5-phosphate</name>
        <dbReference type="ChEBI" id="CHEBI:57792"/>
    </ligand>
</feature>
<feature type="binding site" evidence="1">
    <location>
        <position position="208"/>
    </location>
    <ligand>
        <name>NADPH</name>
        <dbReference type="ChEBI" id="CHEBI:57783"/>
    </ligand>
</feature>
<feature type="binding site" evidence="1">
    <location>
        <position position="215"/>
    </location>
    <ligand>
        <name>1-deoxy-D-xylulose 5-phosphate</name>
        <dbReference type="ChEBI" id="CHEBI:57792"/>
    </ligand>
</feature>
<feature type="binding site" evidence="1">
    <location>
        <position position="220"/>
    </location>
    <ligand>
        <name>1-deoxy-D-xylulose 5-phosphate</name>
        <dbReference type="ChEBI" id="CHEBI:57792"/>
    </ligand>
</feature>
<feature type="binding site" evidence="1">
    <location>
        <position position="221"/>
    </location>
    <ligand>
        <name>1-deoxy-D-xylulose 5-phosphate</name>
        <dbReference type="ChEBI" id="CHEBI:57792"/>
    </ligand>
</feature>
<feature type="binding site" evidence="1">
    <location>
        <position position="224"/>
    </location>
    <ligand>
        <name>1-deoxy-D-xylulose 5-phosphate</name>
        <dbReference type="ChEBI" id="CHEBI:57792"/>
    </ligand>
</feature>
<feature type="binding site" evidence="1">
    <location>
        <position position="224"/>
    </location>
    <ligand>
        <name>Mn(2+)</name>
        <dbReference type="ChEBI" id="CHEBI:29035"/>
    </ligand>
</feature>
<dbReference type="EC" id="1.1.1.267" evidence="1"/>
<dbReference type="EMBL" id="CP000352">
    <property type="protein sequence ID" value="ABF08324.1"/>
    <property type="molecule type" value="Genomic_DNA"/>
</dbReference>
<dbReference type="RefSeq" id="WP_011516191.1">
    <property type="nucleotide sequence ID" value="NC_007973.1"/>
</dbReference>
<dbReference type="SMR" id="Q1LNF2"/>
<dbReference type="STRING" id="266264.Rmet_1441"/>
<dbReference type="KEGG" id="rme:Rmet_1441"/>
<dbReference type="eggNOG" id="COG0743">
    <property type="taxonomic scope" value="Bacteria"/>
</dbReference>
<dbReference type="HOGENOM" id="CLU_035714_4_0_4"/>
<dbReference type="UniPathway" id="UPA00056">
    <property type="reaction ID" value="UER00092"/>
</dbReference>
<dbReference type="Proteomes" id="UP000002429">
    <property type="component" value="Chromosome"/>
</dbReference>
<dbReference type="GO" id="GO:0030604">
    <property type="term" value="F:1-deoxy-D-xylulose-5-phosphate reductoisomerase activity"/>
    <property type="evidence" value="ECO:0007669"/>
    <property type="project" value="UniProtKB-UniRule"/>
</dbReference>
<dbReference type="GO" id="GO:0030145">
    <property type="term" value="F:manganese ion binding"/>
    <property type="evidence" value="ECO:0007669"/>
    <property type="project" value="TreeGrafter"/>
</dbReference>
<dbReference type="GO" id="GO:0070402">
    <property type="term" value="F:NADPH binding"/>
    <property type="evidence" value="ECO:0007669"/>
    <property type="project" value="InterPro"/>
</dbReference>
<dbReference type="GO" id="GO:0051484">
    <property type="term" value="P:isopentenyl diphosphate biosynthetic process, methylerythritol 4-phosphate pathway involved in terpenoid biosynthetic process"/>
    <property type="evidence" value="ECO:0007669"/>
    <property type="project" value="TreeGrafter"/>
</dbReference>
<dbReference type="FunFam" id="1.10.1740.10:FF:000004">
    <property type="entry name" value="1-deoxy-D-xylulose 5-phosphate reductoisomerase"/>
    <property type="match status" value="1"/>
</dbReference>
<dbReference type="FunFam" id="3.40.50.720:FF:000045">
    <property type="entry name" value="1-deoxy-D-xylulose 5-phosphate reductoisomerase"/>
    <property type="match status" value="1"/>
</dbReference>
<dbReference type="Gene3D" id="1.10.1740.10">
    <property type="match status" value="1"/>
</dbReference>
<dbReference type="Gene3D" id="3.40.50.720">
    <property type="entry name" value="NAD(P)-binding Rossmann-like Domain"/>
    <property type="match status" value="1"/>
</dbReference>
<dbReference type="HAMAP" id="MF_00183">
    <property type="entry name" value="DXP_reductoisom"/>
    <property type="match status" value="1"/>
</dbReference>
<dbReference type="InterPro" id="IPR003821">
    <property type="entry name" value="DXP_reductoisomerase"/>
</dbReference>
<dbReference type="InterPro" id="IPR013644">
    <property type="entry name" value="DXP_reductoisomerase_C"/>
</dbReference>
<dbReference type="InterPro" id="IPR013512">
    <property type="entry name" value="DXP_reductoisomerase_N"/>
</dbReference>
<dbReference type="InterPro" id="IPR026877">
    <property type="entry name" value="DXPR_C"/>
</dbReference>
<dbReference type="InterPro" id="IPR036169">
    <property type="entry name" value="DXPR_C_sf"/>
</dbReference>
<dbReference type="InterPro" id="IPR036291">
    <property type="entry name" value="NAD(P)-bd_dom_sf"/>
</dbReference>
<dbReference type="NCBIfam" id="TIGR00243">
    <property type="entry name" value="Dxr"/>
    <property type="match status" value="1"/>
</dbReference>
<dbReference type="NCBIfam" id="NF003938">
    <property type="entry name" value="PRK05447.1-1"/>
    <property type="match status" value="1"/>
</dbReference>
<dbReference type="NCBIfam" id="NF009114">
    <property type="entry name" value="PRK12464.1"/>
    <property type="match status" value="1"/>
</dbReference>
<dbReference type="PANTHER" id="PTHR30525">
    <property type="entry name" value="1-DEOXY-D-XYLULOSE 5-PHOSPHATE REDUCTOISOMERASE"/>
    <property type="match status" value="1"/>
</dbReference>
<dbReference type="PANTHER" id="PTHR30525:SF0">
    <property type="entry name" value="1-DEOXY-D-XYLULOSE 5-PHOSPHATE REDUCTOISOMERASE, CHLOROPLASTIC"/>
    <property type="match status" value="1"/>
</dbReference>
<dbReference type="Pfam" id="PF08436">
    <property type="entry name" value="DXP_redisom_C"/>
    <property type="match status" value="1"/>
</dbReference>
<dbReference type="Pfam" id="PF02670">
    <property type="entry name" value="DXP_reductoisom"/>
    <property type="match status" value="1"/>
</dbReference>
<dbReference type="Pfam" id="PF13288">
    <property type="entry name" value="DXPR_C"/>
    <property type="match status" value="1"/>
</dbReference>
<dbReference type="PIRSF" id="PIRSF006205">
    <property type="entry name" value="Dxp_reductismrs"/>
    <property type="match status" value="1"/>
</dbReference>
<dbReference type="SUPFAM" id="SSF69055">
    <property type="entry name" value="1-deoxy-D-xylulose-5-phosphate reductoisomerase, C-terminal domain"/>
    <property type="match status" value="1"/>
</dbReference>
<dbReference type="SUPFAM" id="SSF55347">
    <property type="entry name" value="Glyceraldehyde-3-phosphate dehydrogenase-like, C-terminal domain"/>
    <property type="match status" value="1"/>
</dbReference>
<dbReference type="SUPFAM" id="SSF51735">
    <property type="entry name" value="NAD(P)-binding Rossmann-fold domains"/>
    <property type="match status" value="1"/>
</dbReference>
<evidence type="ECO:0000255" key="1">
    <source>
        <dbReference type="HAMAP-Rule" id="MF_00183"/>
    </source>
</evidence>
<comment type="function">
    <text evidence="1">Catalyzes the NADPH-dependent rearrangement and reduction of 1-deoxy-D-xylulose-5-phosphate (DXP) to 2-C-methyl-D-erythritol 4-phosphate (MEP).</text>
</comment>
<comment type="catalytic activity">
    <reaction evidence="1">
        <text>2-C-methyl-D-erythritol 4-phosphate + NADP(+) = 1-deoxy-D-xylulose 5-phosphate + NADPH + H(+)</text>
        <dbReference type="Rhea" id="RHEA:13717"/>
        <dbReference type="ChEBI" id="CHEBI:15378"/>
        <dbReference type="ChEBI" id="CHEBI:57783"/>
        <dbReference type="ChEBI" id="CHEBI:57792"/>
        <dbReference type="ChEBI" id="CHEBI:58262"/>
        <dbReference type="ChEBI" id="CHEBI:58349"/>
        <dbReference type="EC" id="1.1.1.267"/>
    </reaction>
    <physiologicalReaction direction="right-to-left" evidence="1">
        <dbReference type="Rhea" id="RHEA:13719"/>
    </physiologicalReaction>
</comment>
<comment type="cofactor">
    <cofactor evidence="1">
        <name>Mg(2+)</name>
        <dbReference type="ChEBI" id="CHEBI:18420"/>
    </cofactor>
    <cofactor evidence="1">
        <name>Mn(2+)</name>
        <dbReference type="ChEBI" id="CHEBI:29035"/>
    </cofactor>
</comment>
<comment type="pathway">
    <text evidence="1">Isoprenoid biosynthesis; isopentenyl diphosphate biosynthesis via DXP pathway; isopentenyl diphosphate from 1-deoxy-D-xylulose 5-phosphate: step 1/6.</text>
</comment>
<comment type="similarity">
    <text evidence="1">Belongs to the DXR family.</text>
</comment>
<sequence>MQRITILGATGSIGESTLDVVRRHPDRYSVHALSAHRQVDKLAAACVEFRPARAVVGSAEAARELEAKLRAAGVPTEVSYGETALESIAEDAGTDAVMAAIVGAAGLRSSLAAARAGKRVLLANKESLVMSGGIFMDAVREHGATLLPIDSEHNAIFQCLPTSDPRYGAGVSKVLLTASGGPFRTRDPSTLHDITPDQACAHPKWVMGRKISVDSATMMNKGLEVIEAHWLFGAPAEKIEVLIHPQSIVHSMVAYADGSVLAQLGNPDMRTPIAYGMAYPERIDSGVTPLDLTVAGGLHFETPDLERFPCLGLAFDALRAGGVAPAVLNAANEVAVEAFLNGKIRFTDIARVVATVLEQPADGSADTLEGVLAADSAARRGAQAQLGSLAGR</sequence>